<accession>B8E6H2</accession>
<comment type="function">
    <text evidence="1">Binds the 23S rRNA.</text>
</comment>
<comment type="cofactor">
    <cofactor evidence="1">
        <name>Zn(2+)</name>
        <dbReference type="ChEBI" id="CHEBI:29105"/>
    </cofactor>
    <text evidence="1">Binds 1 zinc ion per subunit.</text>
</comment>
<comment type="subunit">
    <text evidence="1">Part of the 50S ribosomal subunit.</text>
</comment>
<comment type="similarity">
    <text evidence="1">Belongs to the bacterial ribosomal protein bL31 family. Type A subfamily.</text>
</comment>
<reference key="1">
    <citation type="submission" date="2008-12" db="EMBL/GenBank/DDBJ databases">
        <title>Complete sequence of chromosome of Shewanella baltica OS223.</title>
        <authorList>
            <consortium name="US DOE Joint Genome Institute"/>
            <person name="Lucas S."/>
            <person name="Copeland A."/>
            <person name="Lapidus A."/>
            <person name="Glavina del Rio T."/>
            <person name="Dalin E."/>
            <person name="Tice H."/>
            <person name="Bruce D."/>
            <person name="Goodwin L."/>
            <person name="Pitluck S."/>
            <person name="Chertkov O."/>
            <person name="Meincke L."/>
            <person name="Brettin T."/>
            <person name="Detter J.C."/>
            <person name="Han C."/>
            <person name="Kuske C.R."/>
            <person name="Larimer F."/>
            <person name="Land M."/>
            <person name="Hauser L."/>
            <person name="Kyrpides N."/>
            <person name="Ovchinnikova G."/>
            <person name="Brettar I."/>
            <person name="Rodrigues J."/>
            <person name="Konstantinidis K."/>
            <person name="Tiedje J."/>
        </authorList>
    </citation>
    <scope>NUCLEOTIDE SEQUENCE [LARGE SCALE GENOMIC DNA]</scope>
    <source>
        <strain>OS223</strain>
    </source>
</reference>
<name>RL31_SHEB2</name>
<evidence type="ECO:0000255" key="1">
    <source>
        <dbReference type="HAMAP-Rule" id="MF_00501"/>
    </source>
</evidence>
<evidence type="ECO:0000305" key="2"/>
<dbReference type="EMBL" id="CP001252">
    <property type="protein sequence ID" value="ACK45035.1"/>
    <property type="molecule type" value="Genomic_DNA"/>
</dbReference>
<dbReference type="RefSeq" id="WP_006083277.1">
    <property type="nucleotide sequence ID" value="NC_011663.1"/>
</dbReference>
<dbReference type="SMR" id="B8E6H2"/>
<dbReference type="GeneID" id="11770827"/>
<dbReference type="KEGG" id="sbp:Sbal223_0501"/>
<dbReference type="HOGENOM" id="CLU_114306_4_3_6"/>
<dbReference type="Proteomes" id="UP000002507">
    <property type="component" value="Chromosome"/>
</dbReference>
<dbReference type="GO" id="GO:1990904">
    <property type="term" value="C:ribonucleoprotein complex"/>
    <property type="evidence" value="ECO:0007669"/>
    <property type="project" value="UniProtKB-KW"/>
</dbReference>
<dbReference type="GO" id="GO:0005840">
    <property type="term" value="C:ribosome"/>
    <property type="evidence" value="ECO:0007669"/>
    <property type="project" value="UniProtKB-KW"/>
</dbReference>
<dbReference type="GO" id="GO:0046872">
    <property type="term" value="F:metal ion binding"/>
    <property type="evidence" value="ECO:0007669"/>
    <property type="project" value="UniProtKB-KW"/>
</dbReference>
<dbReference type="GO" id="GO:0019843">
    <property type="term" value="F:rRNA binding"/>
    <property type="evidence" value="ECO:0007669"/>
    <property type="project" value="UniProtKB-KW"/>
</dbReference>
<dbReference type="GO" id="GO:0003735">
    <property type="term" value="F:structural constituent of ribosome"/>
    <property type="evidence" value="ECO:0007669"/>
    <property type="project" value="InterPro"/>
</dbReference>
<dbReference type="GO" id="GO:0006412">
    <property type="term" value="P:translation"/>
    <property type="evidence" value="ECO:0007669"/>
    <property type="project" value="UniProtKB-UniRule"/>
</dbReference>
<dbReference type="Gene3D" id="4.10.830.30">
    <property type="entry name" value="Ribosomal protein L31"/>
    <property type="match status" value="1"/>
</dbReference>
<dbReference type="HAMAP" id="MF_00501">
    <property type="entry name" value="Ribosomal_bL31_1"/>
    <property type="match status" value="1"/>
</dbReference>
<dbReference type="InterPro" id="IPR034704">
    <property type="entry name" value="Ribosomal_bL28/bL31-like_sf"/>
</dbReference>
<dbReference type="InterPro" id="IPR002150">
    <property type="entry name" value="Ribosomal_bL31"/>
</dbReference>
<dbReference type="InterPro" id="IPR027491">
    <property type="entry name" value="Ribosomal_bL31_A"/>
</dbReference>
<dbReference type="InterPro" id="IPR042105">
    <property type="entry name" value="Ribosomal_bL31_sf"/>
</dbReference>
<dbReference type="NCBIfam" id="TIGR00105">
    <property type="entry name" value="L31"/>
    <property type="match status" value="1"/>
</dbReference>
<dbReference type="NCBIfam" id="NF000612">
    <property type="entry name" value="PRK00019.1"/>
    <property type="match status" value="1"/>
</dbReference>
<dbReference type="NCBIfam" id="NF001809">
    <property type="entry name" value="PRK00528.1"/>
    <property type="match status" value="1"/>
</dbReference>
<dbReference type="PANTHER" id="PTHR33280">
    <property type="entry name" value="50S RIBOSOMAL PROTEIN L31, CHLOROPLASTIC"/>
    <property type="match status" value="1"/>
</dbReference>
<dbReference type="PANTHER" id="PTHR33280:SF6">
    <property type="entry name" value="LARGE RIBOSOMAL SUBUNIT PROTEIN BL31A"/>
    <property type="match status" value="1"/>
</dbReference>
<dbReference type="Pfam" id="PF01197">
    <property type="entry name" value="Ribosomal_L31"/>
    <property type="match status" value="1"/>
</dbReference>
<dbReference type="PRINTS" id="PR01249">
    <property type="entry name" value="RIBOSOMALL31"/>
</dbReference>
<dbReference type="SUPFAM" id="SSF143800">
    <property type="entry name" value="L28p-like"/>
    <property type="match status" value="1"/>
</dbReference>
<dbReference type="PROSITE" id="PS01143">
    <property type="entry name" value="RIBOSOMAL_L31"/>
    <property type="match status" value="1"/>
</dbReference>
<proteinExistence type="inferred from homology"/>
<organism>
    <name type="scientific">Shewanella baltica (strain OS223)</name>
    <dbReference type="NCBI Taxonomy" id="407976"/>
    <lineage>
        <taxon>Bacteria</taxon>
        <taxon>Pseudomonadati</taxon>
        <taxon>Pseudomonadota</taxon>
        <taxon>Gammaproteobacteria</taxon>
        <taxon>Alteromonadales</taxon>
        <taxon>Shewanellaceae</taxon>
        <taxon>Shewanella</taxon>
    </lineage>
</organism>
<gene>
    <name evidence="1" type="primary">rpmE</name>
    <name type="ordered locus">Sbal223_0501</name>
</gene>
<sequence>MKPGIHPKYAIITANCTCGNVIKVNSTAGKDLHLDVCGACHPFYTGTQKVVDTGGRIDKFNKRFAVLAKK</sequence>
<keyword id="KW-0479">Metal-binding</keyword>
<keyword id="KW-0687">Ribonucleoprotein</keyword>
<keyword id="KW-0689">Ribosomal protein</keyword>
<keyword id="KW-0694">RNA-binding</keyword>
<keyword id="KW-0699">rRNA-binding</keyword>
<keyword id="KW-0862">Zinc</keyword>
<protein>
    <recommendedName>
        <fullName evidence="1">Large ribosomal subunit protein bL31</fullName>
    </recommendedName>
    <alternativeName>
        <fullName evidence="2">50S ribosomal protein L31</fullName>
    </alternativeName>
</protein>
<feature type="chain" id="PRO_1000176975" description="Large ribosomal subunit protein bL31">
    <location>
        <begin position="1"/>
        <end position="70"/>
    </location>
</feature>
<feature type="binding site" evidence="1">
    <location>
        <position position="16"/>
    </location>
    <ligand>
        <name>Zn(2+)</name>
        <dbReference type="ChEBI" id="CHEBI:29105"/>
    </ligand>
</feature>
<feature type="binding site" evidence="1">
    <location>
        <position position="18"/>
    </location>
    <ligand>
        <name>Zn(2+)</name>
        <dbReference type="ChEBI" id="CHEBI:29105"/>
    </ligand>
</feature>
<feature type="binding site" evidence="1">
    <location>
        <position position="37"/>
    </location>
    <ligand>
        <name>Zn(2+)</name>
        <dbReference type="ChEBI" id="CHEBI:29105"/>
    </ligand>
</feature>
<feature type="binding site" evidence="1">
    <location>
        <position position="40"/>
    </location>
    <ligand>
        <name>Zn(2+)</name>
        <dbReference type="ChEBI" id="CHEBI:29105"/>
    </ligand>
</feature>